<reference key="1">
    <citation type="journal article" date="1991" name="Science">
        <title>Characterization of a cofactor that regulates dimerization of a mammalian homeodomain protein.</title>
        <authorList>
            <person name="Mendel D.B."/>
            <person name="Khavari P.A."/>
            <person name="Conley P.B."/>
            <person name="Graves M.K."/>
            <person name="Hansen L.P."/>
            <person name="Admon A."/>
            <person name="Crabtree G.R."/>
        </authorList>
    </citation>
    <scope>NUCLEOTIDE SEQUENCE [MRNA]</scope>
    <scope>PARTIAL PROTEIN SEQUENCE</scope>
    <source>
        <tissue>Liver</tissue>
    </source>
</reference>
<reference key="2">
    <citation type="journal article" date="1995" name="Biochem. Biophys. Res. Commun.">
        <title>Characterization of the human PCBD gene encoding the bifunctional protein pterin-4 alpha-carbinolamine dehydratase/dimerization cofactor for the transcription factor HNF-1 alpha.</title>
        <authorList>
            <person name="Thoeny B."/>
            <person name="Neuheiser F."/>
            <person name="Blau N."/>
            <person name="Heizmann C.W."/>
        </authorList>
    </citation>
    <scope>NUCLEOTIDE SEQUENCE [GENOMIC DNA / MRNA]</scope>
</reference>
<reference key="3">
    <citation type="journal article" date="1999" name="DNA Cell Biol.">
        <title>Characterization of expression of the gene for human pterin carbinolamine dehydratase/dimerization cofactor of HNF1.</title>
        <authorList>
            <person name="Lei X.D."/>
            <person name="Kaufman S."/>
        </authorList>
    </citation>
    <scope>NUCLEOTIDE SEQUENCE [MRNA]</scope>
</reference>
<reference key="4">
    <citation type="journal article" date="2004" name="Genome Res.">
        <title>The status, quality, and expansion of the NIH full-length cDNA project: the Mammalian Gene Collection (MGC).</title>
        <authorList>
            <consortium name="The MGC Project Team"/>
        </authorList>
    </citation>
    <scope>NUCLEOTIDE SEQUENCE [LARGE SCALE MRNA]</scope>
    <source>
        <tissue>Muscle</tissue>
    </source>
</reference>
<reference key="5">
    <citation type="journal article" date="1993" name="J. Biol. Chem.">
        <title>Phenylalanine hydroxylase-stimulating protein/pterin-4 alpha-carbinolamine dehydratase from rat and human liver. Purification, characterization, and complete amino acid sequence.</title>
        <authorList>
            <person name="Hauer C.R."/>
            <person name="Rebrin I."/>
            <person name="Thoeny B."/>
            <person name="Neuheiser F."/>
            <person name="Curtius H.-C."/>
            <person name="Hunziker P."/>
            <person name="Blau N."/>
            <person name="Ghisla S."/>
            <person name="Heizmann C.W."/>
        </authorList>
    </citation>
    <scope>PROTEIN SEQUENCE OF 2-104</scope>
    <scope>CLEAVAGE OF INITIATOR METHIONINE</scope>
    <scope>ACETYLATION AT ALA-2</scope>
    <source>
        <tissue>Liver</tissue>
    </source>
</reference>
<reference key="6">
    <citation type="journal article" date="2011" name="BMC Syst. Biol.">
        <title>Initial characterization of the human central proteome.</title>
        <authorList>
            <person name="Burkard T.R."/>
            <person name="Planyavsky M."/>
            <person name="Kaupe I."/>
            <person name="Breitwieser F.P."/>
            <person name="Buerckstuemmer T."/>
            <person name="Bennett K.L."/>
            <person name="Superti-Furga G."/>
            <person name="Colinge J."/>
        </authorList>
    </citation>
    <scope>IDENTIFICATION BY MASS SPECTROMETRY [LARGE SCALE ANALYSIS]</scope>
</reference>
<reference key="7">
    <citation type="journal article" date="2014" name="J. Proteomics">
        <title>An enzyme assisted RP-RPLC approach for in-depth analysis of human liver phosphoproteome.</title>
        <authorList>
            <person name="Bian Y."/>
            <person name="Song C."/>
            <person name="Cheng K."/>
            <person name="Dong M."/>
            <person name="Wang F."/>
            <person name="Huang J."/>
            <person name="Sun D."/>
            <person name="Wang L."/>
            <person name="Ye M."/>
            <person name="Zou H."/>
        </authorList>
    </citation>
    <scope>IDENTIFICATION BY MASS SPECTROMETRY [LARGE SCALE ANALYSIS]</scope>
    <source>
        <tissue>Liver</tissue>
    </source>
</reference>
<reference key="8">
    <citation type="journal article" date="1993" name="Am. J. Hum. Genet.">
        <title>Mutation in the 4a-carbinolamine dehydratase gene leads to mild hyperphenylalaninemia with defective cofactor metabolism.</title>
        <authorList>
            <person name="Citron B.A."/>
            <person name="Kaufman S."/>
            <person name="Milstien S."/>
            <person name="Naylor E.W."/>
            <person name="Greene C.L."/>
            <person name="Davis M.D."/>
        </authorList>
    </citation>
    <scope>VARIANTS HPABH4D ARG-82 AND 87-GLU--THR-104 DEL</scope>
</reference>
<reference key="9">
    <citation type="journal article" date="1995" name="Proc. Natl. Acad. Sci. U.S.A.">
        <title>Characterization of the wild-type form of 4a-carbinolamine dehydratase and two naturally occurring mutants associated with hyperphenylalaninemia.</title>
        <authorList>
            <person name="Johnen G."/>
            <person name="Kowlessur D."/>
            <person name="Citron B.A."/>
            <person name="Kaufman S."/>
        </authorList>
    </citation>
    <scope>CHARACTERIZATION OF VARIANT HPABH4D ARG-82</scope>
</reference>
<reference key="10">
    <citation type="journal article" date="1998" name="Am. J. Hum. Genet.">
        <title>Hyperphenylalaninemia with high levels of 7-biopterin is associated with mutations in the PCBD gene encoding the bifunctional protein pterin-4a-carbinolamine dehydratase and transcriptional coactivator (DCoH).</title>
        <authorList>
            <person name="Thoeny B."/>
            <person name="Neuheiser F."/>
            <person name="Kierat L."/>
            <person name="Blaskovics M."/>
            <person name="Arn P.H."/>
            <person name="Ferreira P."/>
            <person name="Rebrin I."/>
            <person name="Ayling J."/>
            <person name="Blau N."/>
        </authorList>
    </citation>
    <scope>VARIANTS HPABH4D ILE-79; 87-GLU--THR-104 DEL AND 98-GLN--THR-104 DEL</scope>
</reference>
<reference key="11">
    <citation type="journal article" date="1998" name="Hum. Genet.">
        <title>Mutations in the pterin-4alpha-carbinolamine dehydratase (PCBD) gene cause a benign form of hyperphenylalaninemia.</title>
        <authorList>
            <person name="Thoeny B."/>
            <person name="Neuheiser F."/>
            <person name="Kierat L."/>
            <person name="Rolland M.O."/>
            <person name="Guibaud P."/>
            <person name="Schlueter T."/>
            <person name="Germann R."/>
            <person name="Heidenreich R.A."/>
            <person name="Duran M."/>
            <person name="de Klerk J.B.C."/>
            <person name="Ayling J.E."/>
            <person name="Blau N."/>
        </authorList>
    </citation>
    <scope>VARIANTS HPABH4D 27-GLU--THR-104 DEL; LYS-97 AND 98-GLN--THR-104 DEL</scope>
    <scope>VARIANT GLN-88</scope>
</reference>
<reference key="12">
    <citation type="journal article" date="2014" name="J. Am. Soc. Nephrol.">
        <title>Mutations in PCBD1 cause hypomagnesemia and renal magnesium wasting.</title>
        <authorList>
            <person name="Ferre S."/>
            <person name="de Baaij J.H."/>
            <person name="Ferreira P."/>
            <person name="Germann R."/>
            <person name="de Klerk J.B."/>
            <person name="Lavrijsen M."/>
            <person name="van Zeeland F."/>
            <person name="Venselaar H."/>
            <person name="Kluijtmans L.A."/>
            <person name="Hoenderop J.G."/>
            <person name="Bindels R.J."/>
        </authorList>
    </citation>
    <scope>CHARACTERIZATION OF VARIANTS HPABH4D 27-GLU--THR-104 DEL; ILE-79; ARG-82; 87-GLU--THR-104 DEL; LYS-97 AND 98-GLU--THR-104 DEL</scope>
    <scope>CHARACTERIZATION OF VARIANT GLN-88</scope>
    <scope>FUNCTION</scope>
    <scope>INTERACTION WITH HNF1B</scope>
    <scope>SUBCELLULAR LOCATION</scope>
</reference>
<keyword id="KW-0007">Acetylation</keyword>
<keyword id="KW-0010">Activator</keyword>
<keyword id="KW-0963">Cytoplasm</keyword>
<keyword id="KW-0903">Direct protein sequencing</keyword>
<keyword id="KW-0225">Disease variant</keyword>
<keyword id="KW-0456">Lyase</keyword>
<keyword id="KW-0539">Nucleus</keyword>
<keyword id="KW-1267">Proteomics identification</keyword>
<keyword id="KW-1185">Reference proteome</keyword>
<keyword id="KW-0783">Tetrahydrobiopterin biosynthesis</keyword>
<keyword id="KW-0804">Transcription</keyword>
<keyword id="KW-0805">Transcription regulation</keyword>
<organism>
    <name type="scientific">Homo sapiens</name>
    <name type="common">Human</name>
    <dbReference type="NCBI Taxonomy" id="9606"/>
    <lineage>
        <taxon>Eukaryota</taxon>
        <taxon>Metazoa</taxon>
        <taxon>Chordata</taxon>
        <taxon>Craniata</taxon>
        <taxon>Vertebrata</taxon>
        <taxon>Euteleostomi</taxon>
        <taxon>Mammalia</taxon>
        <taxon>Eutheria</taxon>
        <taxon>Euarchontoglires</taxon>
        <taxon>Primates</taxon>
        <taxon>Haplorrhini</taxon>
        <taxon>Catarrhini</taxon>
        <taxon>Hominidae</taxon>
        <taxon>Homo</taxon>
    </lineage>
</organism>
<dbReference type="EC" id="4.2.1.96" evidence="2"/>
<dbReference type="EMBL" id="M83742">
    <property type="status" value="NOT_ANNOTATED_CDS"/>
    <property type="molecule type" value="mRNA"/>
</dbReference>
<dbReference type="EMBL" id="L41560">
    <property type="protein sequence ID" value="AAA69662.1"/>
    <property type="molecule type" value="Genomic_DNA"/>
</dbReference>
<dbReference type="EMBL" id="L41559">
    <property type="protein sequence ID" value="AAA69663.1"/>
    <property type="molecule type" value="mRNA"/>
</dbReference>
<dbReference type="EMBL" id="AF082858">
    <property type="protein sequence ID" value="AAD25732.1"/>
    <property type="molecule type" value="mRNA"/>
</dbReference>
<dbReference type="EMBL" id="BC006324">
    <property type="protein sequence ID" value="AAH06324.1"/>
    <property type="molecule type" value="mRNA"/>
</dbReference>
<dbReference type="CCDS" id="CCDS31217.1"/>
<dbReference type="PIR" id="A47010">
    <property type="entry name" value="A47010"/>
</dbReference>
<dbReference type="RefSeq" id="NP_000272.1">
    <property type="nucleotide sequence ID" value="NM_000281.4"/>
</dbReference>
<dbReference type="RefSeq" id="NP_001276726.1">
    <property type="nucleotide sequence ID" value="NM_001289797.1"/>
</dbReference>
<dbReference type="SMR" id="P61457"/>
<dbReference type="BioGRID" id="111125">
    <property type="interactions" value="91"/>
</dbReference>
<dbReference type="FunCoup" id="P61457">
    <property type="interactions" value="436"/>
</dbReference>
<dbReference type="IntAct" id="P61457">
    <property type="interactions" value="106"/>
</dbReference>
<dbReference type="MINT" id="P61457"/>
<dbReference type="STRING" id="9606.ENSP00000299299"/>
<dbReference type="DrugBank" id="DB04400">
    <property type="generic name" value="L-erythro-7,8-dihydrobiopterin"/>
</dbReference>
<dbReference type="MoonDB" id="P61457">
    <property type="type" value="Curated"/>
</dbReference>
<dbReference type="iPTMnet" id="P61457"/>
<dbReference type="PhosphoSitePlus" id="P61457"/>
<dbReference type="BioMuta" id="PCBD1"/>
<dbReference type="DMDM" id="47606444"/>
<dbReference type="jPOST" id="P61457"/>
<dbReference type="MassIVE" id="P61457"/>
<dbReference type="PaxDb" id="9606-ENSP00000299299"/>
<dbReference type="PeptideAtlas" id="P61457"/>
<dbReference type="ProteomicsDB" id="57301"/>
<dbReference type="Pumba" id="P61457"/>
<dbReference type="Antibodypedia" id="29081">
    <property type="antibodies" value="233 antibodies from 28 providers"/>
</dbReference>
<dbReference type="DNASU" id="5092"/>
<dbReference type="Ensembl" id="ENST00000299299.4">
    <property type="protein sequence ID" value="ENSP00000299299.3"/>
    <property type="gene ID" value="ENSG00000166228.9"/>
</dbReference>
<dbReference type="GeneID" id="5092"/>
<dbReference type="KEGG" id="hsa:5092"/>
<dbReference type="MANE-Select" id="ENST00000299299.4">
    <property type="protein sequence ID" value="ENSP00000299299.3"/>
    <property type="RefSeq nucleotide sequence ID" value="NM_000281.4"/>
    <property type="RefSeq protein sequence ID" value="NP_000272.1"/>
</dbReference>
<dbReference type="UCSC" id="uc001jrn.3">
    <property type="organism name" value="human"/>
</dbReference>
<dbReference type="AGR" id="HGNC:8646"/>
<dbReference type="CTD" id="5092"/>
<dbReference type="DisGeNET" id="5092"/>
<dbReference type="GeneCards" id="PCBD1"/>
<dbReference type="HGNC" id="HGNC:8646">
    <property type="gene designation" value="PCBD1"/>
</dbReference>
<dbReference type="HPA" id="ENSG00000166228">
    <property type="expression patterns" value="Tissue enhanced (liver)"/>
</dbReference>
<dbReference type="MalaCards" id="PCBD1"/>
<dbReference type="MIM" id="126090">
    <property type="type" value="gene"/>
</dbReference>
<dbReference type="MIM" id="264070">
    <property type="type" value="phenotype"/>
</dbReference>
<dbReference type="neXtProt" id="NX_P61457"/>
<dbReference type="OpenTargets" id="ENSG00000166228"/>
<dbReference type="Orphanet" id="1578">
    <property type="disease" value="Pterin-4 alpha-carbinolamine dehydratase deficiency"/>
</dbReference>
<dbReference type="PharmGKB" id="PA32985"/>
<dbReference type="VEuPathDB" id="HostDB:ENSG00000166228"/>
<dbReference type="eggNOG" id="KOG4073">
    <property type="taxonomic scope" value="Eukaryota"/>
</dbReference>
<dbReference type="GeneTree" id="ENSGT00390000007221"/>
<dbReference type="HOGENOM" id="CLU_081974_3_2_1"/>
<dbReference type="InParanoid" id="P61457"/>
<dbReference type="OMA" id="WAEKWNH"/>
<dbReference type="OrthoDB" id="277398at2759"/>
<dbReference type="PAN-GO" id="P61457">
    <property type="GO annotations" value="1 GO annotation based on evolutionary models"/>
</dbReference>
<dbReference type="PhylomeDB" id="P61457"/>
<dbReference type="TreeFam" id="TF300188"/>
<dbReference type="BioCyc" id="MetaCyc:HS09360-MONOMER"/>
<dbReference type="PathwayCommons" id="P61457"/>
<dbReference type="Reactome" id="R-HSA-8964208">
    <property type="pathway name" value="Phenylalanine metabolism"/>
</dbReference>
<dbReference type="SignaLink" id="P61457"/>
<dbReference type="SIGNOR" id="P61457"/>
<dbReference type="BioGRID-ORCS" id="5092">
    <property type="hits" value="17 hits in 1173 CRISPR screens"/>
</dbReference>
<dbReference type="ChiTaRS" id="PCBD1">
    <property type="organism name" value="human"/>
</dbReference>
<dbReference type="GeneWiki" id="PCBD1"/>
<dbReference type="GenomeRNAi" id="5092"/>
<dbReference type="Pharos" id="P61457">
    <property type="development level" value="Tbio"/>
</dbReference>
<dbReference type="PRO" id="PR:P61457"/>
<dbReference type="Proteomes" id="UP000005640">
    <property type="component" value="Chromosome 10"/>
</dbReference>
<dbReference type="RNAct" id="P61457">
    <property type="molecule type" value="protein"/>
</dbReference>
<dbReference type="Bgee" id="ENSG00000166228">
    <property type="expression patterns" value="Expressed in right lobe of liver and 202 other cell types or tissues"/>
</dbReference>
<dbReference type="GO" id="GO:0005829">
    <property type="term" value="C:cytosol"/>
    <property type="evidence" value="ECO:0000314"/>
    <property type="project" value="HPA"/>
</dbReference>
<dbReference type="GO" id="GO:0070062">
    <property type="term" value="C:extracellular exosome"/>
    <property type="evidence" value="ECO:0007005"/>
    <property type="project" value="UniProtKB"/>
</dbReference>
<dbReference type="GO" id="GO:0005654">
    <property type="term" value="C:nucleoplasm"/>
    <property type="evidence" value="ECO:0000314"/>
    <property type="project" value="HPA"/>
</dbReference>
<dbReference type="GO" id="GO:0008124">
    <property type="term" value="F:4-alpha-hydroxytetrahydrobiopterin dehydratase activity"/>
    <property type="evidence" value="ECO:0000318"/>
    <property type="project" value="GO_Central"/>
</dbReference>
<dbReference type="GO" id="GO:0042802">
    <property type="term" value="F:identical protein binding"/>
    <property type="evidence" value="ECO:0000353"/>
    <property type="project" value="IntAct"/>
</dbReference>
<dbReference type="GO" id="GO:0004505">
    <property type="term" value="F:phenylalanine 4-monooxygenase activity"/>
    <property type="evidence" value="ECO:0007669"/>
    <property type="project" value="Ensembl"/>
</dbReference>
<dbReference type="GO" id="GO:0003713">
    <property type="term" value="F:transcription coactivator activity"/>
    <property type="evidence" value="ECO:0000304"/>
    <property type="project" value="ProtInc"/>
</dbReference>
<dbReference type="GO" id="GO:0006729">
    <property type="term" value="P:tetrahydrobiopterin biosynthetic process"/>
    <property type="evidence" value="ECO:0007669"/>
    <property type="project" value="UniProtKB-KW"/>
</dbReference>
<dbReference type="CDD" id="cd00914">
    <property type="entry name" value="PCD_DCoH_subfamily_b"/>
    <property type="match status" value="1"/>
</dbReference>
<dbReference type="FunFam" id="3.30.1360.20:FF:000001">
    <property type="entry name" value="Pterin-4-alpha-carbinolamine dehydratase 2"/>
    <property type="match status" value="1"/>
</dbReference>
<dbReference type="Gene3D" id="3.30.1360.20">
    <property type="entry name" value="Transcriptional coactivator/pterin dehydratase"/>
    <property type="match status" value="1"/>
</dbReference>
<dbReference type="HAMAP" id="MF_00434">
    <property type="entry name" value="Pterin_4_alpha"/>
    <property type="match status" value="1"/>
</dbReference>
<dbReference type="InterPro" id="IPR036428">
    <property type="entry name" value="PCD_sf"/>
</dbReference>
<dbReference type="InterPro" id="IPR001533">
    <property type="entry name" value="Pterin_deHydtase"/>
</dbReference>
<dbReference type="NCBIfam" id="NF002018">
    <property type="entry name" value="PRK00823.1-3"/>
    <property type="match status" value="1"/>
</dbReference>
<dbReference type="NCBIfam" id="NF002020">
    <property type="entry name" value="PRK00823.1-5"/>
    <property type="match status" value="1"/>
</dbReference>
<dbReference type="PANTHER" id="PTHR12599">
    <property type="entry name" value="PTERIN-4-ALPHA-CARBINOLAMINE DEHYDRATASE"/>
    <property type="match status" value="1"/>
</dbReference>
<dbReference type="PANTHER" id="PTHR12599:SF13">
    <property type="entry name" value="PTERIN-4-ALPHA-CARBINOLAMINE DEHYDRATASE"/>
    <property type="match status" value="1"/>
</dbReference>
<dbReference type="Pfam" id="PF01329">
    <property type="entry name" value="Pterin_4a"/>
    <property type="match status" value="1"/>
</dbReference>
<dbReference type="SUPFAM" id="SSF55248">
    <property type="entry name" value="PCD-like"/>
    <property type="match status" value="1"/>
</dbReference>
<protein>
    <recommendedName>
        <fullName>Pterin-4-alpha-carbinolamine dehydratase</fullName>
        <shortName>PHS</shortName>
        <ecNumber evidence="2">4.2.1.96</ecNumber>
    </recommendedName>
    <alternativeName>
        <fullName>4-alpha-hydroxy-tetrahydropterin dehydratase</fullName>
    </alternativeName>
    <alternativeName>
        <fullName>Dimerization cofactor of hepatocyte nuclear factor 1-alpha</fullName>
        <shortName>DCoH</shortName>
        <shortName>Dimerization cofactor of HNF1</shortName>
    </alternativeName>
    <alternativeName>
        <fullName>Phenylalanine hydroxylase-stimulating protein</fullName>
    </alternativeName>
    <alternativeName>
        <fullName>Pterin carbinolamine dehydratase</fullName>
        <shortName>PCD</shortName>
    </alternativeName>
</protein>
<sequence length="104" mass="12000">MAGKAHRLSAEERDQLLPNLRAVGWNELEGRDAIFKQFHFKDFNRAFGFMTRVALQAEKLDHHPEWFNVYNKVHITLSTHECAGLSERDINLASFIEQVAVSMT</sequence>
<proteinExistence type="evidence at protein level"/>
<feature type="initiator methionine" description="Removed" evidence="5">
    <location>
        <position position="1"/>
    </location>
</feature>
<feature type="chain" id="PRO_0000063052" description="Pterin-4-alpha-carbinolamine dehydratase">
    <location>
        <begin position="2"/>
        <end position="104"/>
    </location>
</feature>
<feature type="binding site" evidence="1">
    <location>
        <begin position="61"/>
        <end position="63"/>
    </location>
    <ligand>
        <name>substrate</name>
    </ligand>
</feature>
<feature type="binding site" evidence="1">
    <location>
        <begin position="78"/>
        <end position="81"/>
    </location>
    <ligand>
        <name>substrate</name>
    </ligand>
</feature>
<feature type="modified residue" description="N-acetylalanine" evidence="5">
    <location>
        <position position="2"/>
    </location>
</feature>
<feature type="sequence variant" id="VAR_084829" description="In HPABH4D; reduced protein levels; loss of HNF1B interaction; loss of HNF1B-coactivator activity; dbSNP:rs727505360." evidence="3 8">
    <location>
        <begin position="27"/>
        <end position="104"/>
    </location>
</feature>
<feature type="sequence variant" id="VAR_005527" description="In HPABH4D; increased proteolytic degradation; reduced interaction with HNF1B; loss of HNF1B-coactivator activity; dbSNP:rs121913014." evidence="3 7">
    <original>T</original>
    <variation>I</variation>
    <location>
        <position position="79"/>
    </location>
</feature>
<feature type="sequence variant" id="VAR_005528" description="In HPABH4D; increased proteolytic degradation; reduced dehydratase activity; no impact on hydroxytetrahydrobiopterin-binding; reduced interaction with HNF1B; partial impact on HNF1B-coactivator activity; dbSNP:rs104894177." evidence="3 4 6">
    <original>C</original>
    <variation>R</variation>
    <location>
        <position position="82"/>
    </location>
</feature>
<feature type="sequence variant" id="VAR_084830" description="In HPABH4D; increased proteolytic degradation; loss of HNF1B interaction; loss of HNF1B-coactivator activity; dbSNP:rs104894172." evidence="3 4 7">
    <location>
        <begin position="87"/>
        <end position="104"/>
    </location>
</feature>
<feature type="sequence variant" id="VAR_005529" description="No impact on HNF1B interaction; no impact on HNF1B-coactivator activity; dbSNP:rs115117837." evidence="3 8">
    <original>R</original>
    <variation>Q</variation>
    <location>
        <position position="88"/>
    </location>
</feature>
<feature type="sequence variant" id="VAR_005530" description="In HPABH4D; increased proteolytic degradation; loss of HNF1B interaction; loss of HNF1B-coactivator activity; dbSNP:rs397518416." evidence="3 8">
    <original>E</original>
    <variation>K</variation>
    <location>
        <position position="97"/>
    </location>
</feature>
<feature type="sequence variant" id="VAR_084831" description="In HPABH4D; increased proteolytic degradation; loss of HNF1B interaction; loss of HNF1B-coactivator activity; dbSNP:rs121913015." evidence="3 7">
    <location>
        <begin position="98"/>
        <end position="104"/>
    </location>
</feature>
<evidence type="ECO:0000250" key="1"/>
<evidence type="ECO:0000250" key="2">
    <source>
        <dbReference type="UniProtKB" id="P61459"/>
    </source>
</evidence>
<evidence type="ECO:0000269" key="3">
    <source>
    </source>
</evidence>
<evidence type="ECO:0000269" key="4">
    <source>
    </source>
</evidence>
<evidence type="ECO:0000269" key="5">
    <source>
    </source>
</evidence>
<evidence type="ECO:0000269" key="6">
    <source>
    </source>
</evidence>
<evidence type="ECO:0000269" key="7">
    <source>
    </source>
</evidence>
<evidence type="ECO:0000269" key="8">
    <source>
    </source>
</evidence>
<evidence type="ECO:0000305" key="9"/>
<name>PHS_HUMAN</name>
<accession>P61457</accession>
<accession>P70519</accession>
<accession>P80095</accession>
<accession>Q9D930</accession>
<comment type="function">
    <text evidence="2 3">Involved in tetrahydrobiopterin biosynthesis (By similarity). Seems to both prevent the formation of 7-pterins and accelerate the formation of quinonoid-BH2. Coactivator for HNF1A-dependent transcription (By similarity). Regulates the dimerization of homeodomain protein HNF1A and enhances its transcriptional activity (By similarity). Also acts as a coactivator for HNF1B-dependent transcription (PubMed:24204001).</text>
</comment>
<comment type="catalytic activity">
    <reaction evidence="2">
        <text>(4aS,6R)-4a-hydroxy-L-erythro-5,6,7,8-tetrahydrobiopterin = (6R)-L-erythro-6,7-dihydrobiopterin + H2O</text>
        <dbReference type="Rhea" id="RHEA:11920"/>
        <dbReference type="ChEBI" id="CHEBI:15377"/>
        <dbReference type="ChEBI" id="CHEBI:15642"/>
        <dbReference type="ChEBI" id="CHEBI:43120"/>
        <dbReference type="EC" id="4.2.1.96"/>
    </reaction>
</comment>
<comment type="subunit">
    <text evidence="2 3">Homotetramer and homodimer (By similarity). Heterotetramer with HNF1A; formed by a dimer of dimers (By similarity). Interacts with HNF1B (via HNF-p1 domain); the interaction increases HNF1B transactivation activity (PubMed:24204001).</text>
</comment>
<comment type="interaction">
    <interactant intactId="EBI-740475">
        <id>P61457</id>
    </interactant>
    <interactant intactId="EBI-396258">
        <id>Q9UKV3</id>
        <label>ACIN1</label>
    </interactant>
    <organismsDiffer>false</organismsDiffer>
    <experiments>2</experiments>
</comment>
<comment type="interaction">
    <interactant intactId="EBI-740475">
        <id>P61457</id>
    </interactant>
    <interactant intactId="EBI-77613">
        <id>P05067</id>
        <label>APP</label>
    </interactant>
    <organismsDiffer>false</organismsDiffer>
    <experiments>2</experiments>
</comment>
<comment type="interaction">
    <interactant intactId="EBI-740475">
        <id>P61457</id>
    </interactant>
    <interactant intactId="EBI-740459">
        <id>P51116</id>
        <label>FXR2</label>
    </interactant>
    <organismsDiffer>false</organismsDiffer>
    <experiments>6</experiments>
</comment>
<comment type="interaction">
    <interactant intactId="EBI-740475">
        <id>P61457</id>
    </interactant>
    <interactant intactId="EBI-739467">
        <id>Q9H8Y8</id>
        <label>GORASP2</label>
    </interactant>
    <organismsDiffer>false</organismsDiffer>
    <experiments>6</experiments>
</comment>
<comment type="interaction">
    <interactant intactId="EBI-740475">
        <id>P61457</id>
    </interactant>
    <interactant intactId="EBI-636034">
        <id>P20823</id>
        <label>HNF1A</label>
    </interactant>
    <organismsDiffer>false</organismsDiffer>
    <experiments>3</experiments>
</comment>
<comment type="interaction">
    <interactant intactId="EBI-740475">
        <id>P61457</id>
    </interactant>
    <interactant intactId="EBI-2798841">
        <id>P35680</id>
        <label>HNF1B</label>
    </interactant>
    <organismsDiffer>false</organismsDiffer>
    <experiments>8</experiments>
</comment>
<comment type="interaction">
    <interactant intactId="EBI-740475">
        <id>P61457</id>
    </interactant>
    <interactant intactId="EBI-2556193">
        <id>Q63ZY3</id>
        <label>KANK2</label>
    </interactant>
    <organismsDiffer>false</organismsDiffer>
    <experiments>3</experiments>
</comment>
<comment type="interaction">
    <interactant intactId="EBI-740475">
        <id>P61457</id>
    </interactant>
    <interactant intactId="EBI-739832">
        <id>Q8TBB1</id>
        <label>LNX1</label>
    </interactant>
    <organismsDiffer>false</organismsDiffer>
    <experiments>7</experiments>
</comment>
<comment type="interaction">
    <interactant intactId="EBI-740475">
        <id>P61457</id>
    </interactant>
    <interactant intactId="EBI-741158">
        <id>Q96HA8</id>
        <label>NTAQ1</label>
    </interactant>
    <organismsDiffer>false</organismsDiffer>
    <experiments>4</experiments>
</comment>
<comment type="interaction">
    <interactant intactId="EBI-740475">
        <id>P61457</id>
    </interactant>
    <interactant intactId="EBI-740475">
        <id>P61457</id>
        <label>PCBD1</label>
    </interactant>
    <organismsDiffer>false</organismsDiffer>
    <experiments>8</experiments>
</comment>
<comment type="interaction">
    <interactant intactId="EBI-740475">
        <id>P61457</id>
    </interactant>
    <interactant intactId="EBI-634289">
        <id>Q9H0N5</id>
        <label>PCBD2</label>
    </interactant>
    <organismsDiffer>false</organismsDiffer>
    <experiments>4</experiments>
</comment>
<comment type="interaction">
    <interactant intactId="EBI-740475">
        <id>P61457</id>
    </interactant>
    <interactant intactId="EBI-79165">
        <id>Q9NRD5</id>
        <label>PICK1</label>
    </interactant>
    <organismsDiffer>false</organismsDiffer>
    <experiments>3</experiments>
</comment>
<comment type="interaction">
    <interactant intactId="EBI-740475">
        <id>P61457</id>
    </interactant>
    <interactant intactId="EBI-359352">
        <id>P25786</id>
        <label>PSMA1</label>
    </interactant>
    <organismsDiffer>false</organismsDiffer>
    <experiments>3</experiments>
</comment>
<comment type="interaction">
    <interactant intactId="EBI-740475">
        <id>P61457</id>
    </interactant>
    <interactant intactId="EBI-727004">
        <id>O00560</id>
        <label>SDCBP</label>
    </interactant>
    <organismsDiffer>false</organismsDiffer>
    <experiments>3</experiments>
</comment>
<comment type="interaction">
    <interactant intactId="EBI-740475">
        <id>P61457</id>
    </interactant>
    <interactant intactId="EBI-10224676">
        <id>Q07654</id>
        <label>TFF3</label>
    </interactant>
    <organismsDiffer>false</organismsDiffer>
    <experiments>6</experiments>
</comment>
<comment type="interaction">
    <interactant intactId="EBI-740475">
        <id>P61457</id>
    </interactant>
    <interactant intactId="EBI-16429014">
        <id>A0A0S2Z5X4</id>
        <label>ZNF688</label>
    </interactant>
    <organismsDiffer>false</organismsDiffer>
    <experiments>3</experiments>
</comment>
<comment type="subcellular location">
    <subcellularLocation>
        <location evidence="3">Cytoplasm</location>
    </subcellularLocation>
    <subcellularLocation>
        <location evidence="3">Nucleus</location>
    </subcellularLocation>
    <text evidence="3">Recruited to the nucleus through the interaction with HNF1B.</text>
</comment>
<comment type="disease" evidence="3 4 6 7 8">
    <disease id="DI-01279">
        <name>Hyperphenylalaninemia, BH4-deficient, D</name>
        <acronym>HPABH4D</acronym>
        <description>An autosomal recessive disease characterized by primapterinuria, a variant form of hyperphenylalaninemia defined by increased excretion of 7-substituted pterins in the urine. Patients with primapterinuria show an increased ratio of neopterin to biopterin in the urine, excretion of subnormal levels of biopterins, and normal levels of biogenic amines in cerebrospinal fluid. Neurologic signs are mild, present in the neonatal period only, and include hypotonia, delayed motor development and tremor.</description>
        <dbReference type="MIM" id="264070"/>
    </disease>
    <text>The disease is caused by variants affecting the gene represented in this entry.</text>
</comment>
<comment type="similarity">
    <text evidence="9">Belongs to the pterin-4-alpha-carbinolamine dehydratase family.</text>
</comment>
<gene>
    <name type="primary">PCBD1</name>
    <name type="synonym">DCOH</name>
    <name type="synonym">PCBD</name>
</gene>